<proteinExistence type="inferred from homology"/>
<geneLocation type="chloroplast"/>
<evidence type="ECO:0000250" key="1"/>
<evidence type="ECO:0000255" key="2">
    <source>
        <dbReference type="HAMAP-Rule" id="MF_01344"/>
    </source>
</evidence>
<dbReference type="EMBL" id="AP000423">
    <property type="protein sequence ID" value="BAA84416.1"/>
    <property type="molecule type" value="Genomic_DNA"/>
</dbReference>
<dbReference type="RefSeq" id="NP_051089.1">
    <property type="nucleotide sequence ID" value="NC_000932.1"/>
</dbReference>
<dbReference type="SMR" id="P56774"/>
<dbReference type="BioGRID" id="29934">
    <property type="interactions" value="2"/>
</dbReference>
<dbReference type="FunCoup" id="P56774">
    <property type="interactions" value="295"/>
</dbReference>
<dbReference type="STRING" id="3702.P56774"/>
<dbReference type="TCDB" id="3.D.3.5.2">
    <property type="family name" value="the proton-translocating quinol:cytochrome c reductase (qcr) superfamily"/>
</dbReference>
<dbReference type="PaxDb" id="3702-ATCG00730.1"/>
<dbReference type="ProteomicsDB" id="236699"/>
<dbReference type="EnsemblPlants" id="ATCG00730.1">
    <property type="protein sequence ID" value="ATCG00730.1"/>
    <property type="gene ID" value="ATCG00730"/>
</dbReference>
<dbReference type="GeneID" id="844728"/>
<dbReference type="Gramene" id="ATCG00730.1">
    <property type="protein sequence ID" value="ATCG00730.1"/>
    <property type="gene ID" value="ATCG00730"/>
</dbReference>
<dbReference type="KEGG" id="ath:ArthCp054"/>
<dbReference type="Araport" id="ATCG00730"/>
<dbReference type="TAIR" id="ATCG00730">
    <property type="gene designation" value="PETD"/>
</dbReference>
<dbReference type="eggNOG" id="KOG4663">
    <property type="taxonomic scope" value="Eukaryota"/>
</dbReference>
<dbReference type="HOGENOM" id="CLU_112652_0_0_1"/>
<dbReference type="InParanoid" id="P56774"/>
<dbReference type="OMA" id="KKGMGHN"/>
<dbReference type="PRO" id="PR:P56774"/>
<dbReference type="Proteomes" id="UP000006548">
    <property type="component" value="Chloroplast Pltd"/>
</dbReference>
<dbReference type="ExpressionAtlas" id="P56774">
    <property type="expression patterns" value="baseline and differential"/>
</dbReference>
<dbReference type="GO" id="GO:0009507">
    <property type="term" value="C:chloroplast"/>
    <property type="evidence" value="ECO:0007005"/>
    <property type="project" value="TAIR"/>
</dbReference>
<dbReference type="GO" id="GO:0009534">
    <property type="term" value="C:chloroplast thylakoid"/>
    <property type="evidence" value="ECO:0007005"/>
    <property type="project" value="TAIR"/>
</dbReference>
<dbReference type="GO" id="GO:0009535">
    <property type="term" value="C:chloroplast thylakoid membrane"/>
    <property type="evidence" value="ECO:0007005"/>
    <property type="project" value="TAIR"/>
</dbReference>
<dbReference type="GO" id="GO:0009536">
    <property type="term" value="C:plastid"/>
    <property type="evidence" value="ECO:0007005"/>
    <property type="project" value="TAIR"/>
</dbReference>
<dbReference type="GO" id="GO:0009579">
    <property type="term" value="C:thylakoid"/>
    <property type="evidence" value="ECO:0007005"/>
    <property type="project" value="TAIR"/>
</dbReference>
<dbReference type="GO" id="GO:0045158">
    <property type="term" value="F:electron transporter, transferring electrons within cytochrome b6/f complex of photosystem II activity"/>
    <property type="evidence" value="ECO:0007669"/>
    <property type="project" value="UniProtKB-UniRule"/>
</dbReference>
<dbReference type="GO" id="GO:0045156">
    <property type="term" value="F:electron transporter, transferring electrons within the cyclic electron transport pathway of photosynthesis activity"/>
    <property type="evidence" value="ECO:0007669"/>
    <property type="project" value="InterPro"/>
</dbReference>
<dbReference type="GO" id="GO:0016491">
    <property type="term" value="F:oxidoreductase activity"/>
    <property type="evidence" value="ECO:0007669"/>
    <property type="project" value="InterPro"/>
</dbReference>
<dbReference type="GO" id="GO:0009767">
    <property type="term" value="P:photosynthetic electron transport chain"/>
    <property type="evidence" value="ECO:0007669"/>
    <property type="project" value="InterPro"/>
</dbReference>
<dbReference type="CDD" id="cd00290">
    <property type="entry name" value="cytochrome_b_C"/>
    <property type="match status" value="1"/>
</dbReference>
<dbReference type="FunFam" id="1.10.287.980:FF:000001">
    <property type="entry name" value="Cytochrome b6-f complex subunit 4"/>
    <property type="match status" value="1"/>
</dbReference>
<dbReference type="FunFam" id="1.20.5.510:FF:000002">
    <property type="entry name" value="Cytochrome b6-f complex subunit 4"/>
    <property type="match status" value="1"/>
</dbReference>
<dbReference type="Gene3D" id="1.10.287.980">
    <property type="entry name" value="plastocyanin oxidoreductase"/>
    <property type="match status" value="1"/>
</dbReference>
<dbReference type="Gene3D" id="1.20.5.510">
    <property type="entry name" value="Single helix bin"/>
    <property type="match status" value="1"/>
</dbReference>
<dbReference type="HAMAP" id="MF_01344">
    <property type="entry name" value="Cytb6_f_subIV"/>
    <property type="match status" value="1"/>
</dbReference>
<dbReference type="InterPro" id="IPR005798">
    <property type="entry name" value="Cyt_b/b6_C"/>
</dbReference>
<dbReference type="InterPro" id="IPR036150">
    <property type="entry name" value="Cyt_b/b6_C_sf"/>
</dbReference>
<dbReference type="InterPro" id="IPR005870">
    <property type="entry name" value="Cyt_b6/f_cplx_suIV"/>
</dbReference>
<dbReference type="InterPro" id="IPR048260">
    <property type="entry name" value="Cytochrome_b_C_euk/bac"/>
</dbReference>
<dbReference type="NCBIfam" id="TIGR01156">
    <property type="entry name" value="cytb6_f_IV"/>
    <property type="match status" value="1"/>
</dbReference>
<dbReference type="PANTHER" id="PTHR19271">
    <property type="entry name" value="CYTOCHROME B"/>
    <property type="match status" value="1"/>
</dbReference>
<dbReference type="PANTHER" id="PTHR19271:SF41">
    <property type="entry name" value="CYTOCHROME B_B6 C-TERMINAL REGION PROFILE DOMAIN-CONTAINING PROTEIN"/>
    <property type="match status" value="1"/>
</dbReference>
<dbReference type="Pfam" id="PF00032">
    <property type="entry name" value="Cytochrom_B_C"/>
    <property type="match status" value="1"/>
</dbReference>
<dbReference type="PIRSF" id="PIRSF000033">
    <property type="entry name" value="B6f_17K"/>
    <property type="match status" value="1"/>
</dbReference>
<dbReference type="SUPFAM" id="SSF81648">
    <property type="entry name" value="a domain/subunit of cytochrome bc1 complex (Ubiquinol-cytochrome c reductase)"/>
    <property type="match status" value="1"/>
</dbReference>
<dbReference type="PROSITE" id="PS51003">
    <property type="entry name" value="CYTB_CTER"/>
    <property type="match status" value="1"/>
</dbReference>
<keyword id="KW-0150">Chloroplast</keyword>
<keyword id="KW-0249">Electron transport</keyword>
<keyword id="KW-0472">Membrane</keyword>
<keyword id="KW-0602">Photosynthesis</keyword>
<keyword id="KW-0934">Plastid</keyword>
<keyword id="KW-1185">Reference proteome</keyword>
<keyword id="KW-0793">Thylakoid</keyword>
<keyword id="KW-0812">Transmembrane</keyword>
<keyword id="KW-1133">Transmembrane helix</keyword>
<keyword id="KW-0813">Transport</keyword>
<feature type="chain" id="PRO_0000061846" description="Cytochrome b6-f complex subunit 4">
    <location>
        <begin position="1"/>
        <end position="160"/>
    </location>
</feature>
<feature type="transmembrane region" description="Helical" evidence="2">
    <location>
        <begin position="36"/>
        <end position="56"/>
    </location>
</feature>
<feature type="transmembrane region" description="Helical" evidence="2">
    <location>
        <begin position="95"/>
        <end position="115"/>
    </location>
</feature>
<feature type="transmembrane region" description="Helical" evidence="2">
    <location>
        <begin position="131"/>
        <end position="151"/>
    </location>
</feature>
<gene>
    <name evidence="2" type="primary">petD</name>
    <name type="ordered locus">AtCg00730</name>
</gene>
<sequence>MGVTKKPDLNDPVLRAKLAKGMGHNYYGEPAWPNDLLYIFPVVILGTIACNVGLAVLEPSMIGEPADPFATPLEILPEWYFFPVFQILRTVPNKLLGVLLMVSVPAGLLTVPFLENVNKFQNPFRRPVATTVFLIGTAAALWLGIGATLPIDKSLTLGLF</sequence>
<accession>P56774</accession>
<organism>
    <name type="scientific">Arabidopsis thaliana</name>
    <name type="common">Mouse-ear cress</name>
    <dbReference type="NCBI Taxonomy" id="3702"/>
    <lineage>
        <taxon>Eukaryota</taxon>
        <taxon>Viridiplantae</taxon>
        <taxon>Streptophyta</taxon>
        <taxon>Embryophyta</taxon>
        <taxon>Tracheophyta</taxon>
        <taxon>Spermatophyta</taxon>
        <taxon>Magnoliopsida</taxon>
        <taxon>eudicotyledons</taxon>
        <taxon>Gunneridae</taxon>
        <taxon>Pentapetalae</taxon>
        <taxon>rosids</taxon>
        <taxon>malvids</taxon>
        <taxon>Brassicales</taxon>
        <taxon>Brassicaceae</taxon>
        <taxon>Camelineae</taxon>
        <taxon>Arabidopsis</taxon>
    </lineage>
</organism>
<protein>
    <recommendedName>
        <fullName evidence="2">Cytochrome b6-f complex subunit 4</fullName>
    </recommendedName>
    <alternativeName>
        <fullName evidence="2">17 kDa polypeptide</fullName>
    </alternativeName>
</protein>
<name>PETD_ARATH</name>
<comment type="function">
    <text evidence="2">Component of the cytochrome b6-f complex, which mediates electron transfer between photosystem II (PSII) and photosystem I (PSI), cyclic electron flow around PSI, and state transitions.</text>
</comment>
<comment type="subunit">
    <text evidence="1">The 4 large subunits of the cytochrome b6-f complex are cytochrome b6, subunit IV (17 kDa polypeptide, petD), cytochrome f and the Rieske protein, while the 4 small subunits are petG, petL, petM and petN. The complex functions as a dimer (By similarity).</text>
</comment>
<comment type="subcellular location">
    <subcellularLocation>
        <location evidence="2">Plastid</location>
        <location evidence="2">Chloroplast thylakoid membrane</location>
        <topology evidence="2">Multi-pass membrane protein</topology>
    </subcellularLocation>
</comment>
<comment type="similarity">
    <text evidence="2">Belongs to the cytochrome b family. PetD subfamily.</text>
</comment>
<reference key="1">
    <citation type="journal article" date="1999" name="DNA Res.">
        <title>Complete structure of the chloroplast genome of Arabidopsis thaliana.</title>
        <authorList>
            <person name="Sato S."/>
            <person name="Nakamura Y."/>
            <person name="Kaneko T."/>
            <person name="Asamizu E."/>
            <person name="Tabata S."/>
        </authorList>
    </citation>
    <scope>NUCLEOTIDE SEQUENCE [LARGE SCALE GENOMIC DNA]</scope>
    <source>
        <strain>cv. Columbia</strain>
    </source>
</reference>